<comment type="function">
    <text evidence="7 9 10">The metalloproteinase-disintegrin-like HF3 is a potent hemorrhagic toxin that activates macrophages for phagocytosis through integrin alpha-M/beta-2 (ITGAM/ITGB2). It inhibits collagen-induced platelet aggregation. This protein shows cleavage specificity for substrate for leucine at P1' position, followed by hydrophobic residues in P2' (PubMed:27020778).</text>
</comment>
<comment type="cofactor">
    <cofactor evidence="1">
        <name>Zn(2+)</name>
        <dbReference type="ChEBI" id="CHEBI:29105"/>
    </cofactor>
    <text evidence="1">Binds 1 zinc ion per subunit.</text>
</comment>
<comment type="subunit">
    <text evidence="10">Monomer.</text>
</comment>
<comment type="subcellular location">
    <subcellularLocation>
        <location evidence="7">Secreted</location>
    </subcellularLocation>
</comment>
<comment type="tissue specificity">
    <text evidence="13">Expressed by the venom gland.</text>
</comment>
<comment type="developmental stage">
    <text evidence="8">This protein seems to be found in both adult and newborn B.jararaca venoms.</text>
</comment>
<comment type="miscellaneous">
    <text>The disintegrin domain belongs to the long disintegrin subfamily.</text>
</comment>
<comment type="similarity">
    <text evidence="12">Belongs to the venom metalloproteinase (M12B) family. P-III subfamily. P-IIIa sub-subfamily.</text>
</comment>
<organism>
    <name type="scientific">Bothrops jararaca</name>
    <name type="common">Jararaca</name>
    <name type="synonym">Bothrops jajaraca</name>
    <dbReference type="NCBI Taxonomy" id="8724"/>
    <lineage>
        <taxon>Eukaryota</taxon>
        <taxon>Metazoa</taxon>
        <taxon>Chordata</taxon>
        <taxon>Craniata</taxon>
        <taxon>Vertebrata</taxon>
        <taxon>Euteleostomi</taxon>
        <taxon>Lepidosauria</taxon>
        <taxon>Squamata</taxon>
        <taxon>Bifurcata</taxon>
        <taxon>Unidentata</taxon>
        <taxon>Episquamata</taxon>
        <taxon>Toxicofera</taxon>
        <taxon>Serpentes</taxon>
        <taxon>Colubroidea</taxon>
        <taxon>Viperidae</taxon>
        <taxon>Crotalinae</taxon>
        <taxon>Bothrops</taxon>
    </lineage>
</organism>
<keyword id="KW-0106">Calcium</keyword>
<keyword id="KW-0903">Direct protein sequencing</keyword>
<keyword id="KW-1015">Disulfide bond</keyword>
<keyword id="KW-0325">Glycoprotein</keyword>
<keyword id="KW-1200">Hemorrhagic toxin</keyword>
<keyword id="KW-1199">Hemostasis impairing toxin</keyword>
<keyword id="KW-0378">Hydrolase</keyword>
<keyword id="KW-0479">Metal-binding</keyword>
<keyword id="KW-0482">Metalloprotease</keyword>
<keyword id="KW-1201">Platelet aggregation inhibiting toxin</keyword>
<keyword id="KW-0645">Protease</keyword>
<keyword id="KW-0964">Secreted</keyword>
<keyword id="KW-0732">Signal</keyword>
<keyword id="KW-0800">Toxin</keyword>
<keyword id="KW-0862">Zinc</keyword>
<keyword id="KW-0865">Zymogen</keyword>
<feature type="signal peptide" evidence="3">
    <location>
        <begin position="1"/>
        <end position="20"/>
    </location>
</feature>
<feature type="propeptide" id="PRO_0000326421" evidence="1">
    <location>
        <begin position="21"/>
        <end position="190"/>
    </location>
</feature>
<feature type="chain" id="PRO_0000326422" description="Zinc metalloproteinase-disintegrin-like HF3" evidence="13">
    <location>
        <begin position="191"/>
        <end position="606"/>
    </location>
</feature>
<feature type="domain" description="Peptidase M12B" evidence="5">
    <location>
        <begin position="199"/>
        <end position="395"/>
    </location>
</feature>
<feature type="domain" description="Disintegrin" evidence="4">
    <location>
        <begin position="403"/>
        <end position="489"/>
    </location>
</feature>
<feature type="short sequence motif" description="D/ECD-tripeptide">
    <location>
        <begin position="467"/>
        <end position="469"/>
    </location>
</feature>
<feature type="active site" evidence="5 6">
    <location>
        <position position="336"/>
    </location>
</feature>
<feature type="binding site" evidence="2">
    <location>
        <position position="202"/>
    </location>
    <ligand>
        <name>Ca(2+)</name>
        <dbReference type="ChEBI" id="CHEBI:29108"/>
        <label>1</label>
    </ligand>
</feature>
<feature type="binding site" evidence="2">
    <location>
        <position position="286"/>
    </location>
    <ligand>
        <name>Ca(2+)</name>
        <dbReference type="ChEBI" id="CHEBI:29108"/>
        <label>1</label>
    </ligand>
</feature>
<feature type="binding site" evidence="2">
    <location>
        <position position="335"/>
    </location>
    <ligand>
        <name>Zn(2+)</name>
        <dbReference type="ChEBI" id="CHEBI:29105"/>
        <note>catalytic</note>
    </ligand>
</feature>
<feature type="binding site" evidence="2">
    <location>
        <position position="339"/>
    </location>
    <ligand>
        <name>Zn(2+)</name>
        <dbReference type="ChEBI" id="CHEBI:29105"/>
        <note>catalytic</note>
    </ligand>
</feature>
<feature type="binding site" evidence="2">
    <location>
        <position position="345"/>
    </location>
    <ligand>
        <name>Zn(2+)</name>
        <dbReference type="ChEBI" id="CHEBI:29105"/>
        <note>catalytic</note>
    </ligand>
</feature>
<feature type="binding site" evidence="2">
    <location>
        <position position="390"/>
    </location>
    <ligand>
        <name>Ca(2+)</name>
        <dbReference type="ChEBI" id="CHEBI:29108"/>
        <label>1</label>
    </ligand>
</feature>
<feature type="binding site" evidence="2">
    <location>
        <position position="393"/>
    </location>
    <ligand>
        <name>Ca(2+)</name>
        <dbReference type="ChEBI" id="CHEBI:29108"/>
        <label>1</label>
    </ligand>
</feature>
<feature type="binding site" evidence="2">
    <location>
        <position position="405"/>
    </location>
    <ligand>
        <name>Ca(2+)</name>
        <dbReference type="ChEBI" id="CHEBI:29108"/>
        <label>2</label>
    </ligand>
</feature>
<feature type="binding site" evidence="2">
    <location>
        <position position="408"/>
    </location>
    <ligand>
        <name>Ca(2+)</name>
        <dbReference type="ChEBI" id="CHEBI:29108"/>
        <label>2</label>
    </ligand>
</feature>
<feature type="binding site" evidence="2">
    <location>
        <position position="410"/>
    </location>
    <ligand>
        <name>Ca(2+)</name>
        <dbReference type="ChEBI" id="CHEBI:29108"/>
        <label>2</label>
    </ligand>
</feature>
<feature type="binding site" evidence="2">
    <location>
        <position position="412"/>
    </location>
    <ligand>
        <name>Ca(2+)</name>
        <dbReference type="ChEBI" id="CHEBI:29108"/>
        <label>2</label>
    </ligand>
</feature>
<feature type="binding site" evidence="2">
    <location>
        <position position="415"/>
    </location>
    <ligand>
        <name>Ca(2+)</name>
        <dbReference type="ChEBI" id="CHEBI:29108"/>
        <label>2</label>
    </ligand>
</feature>
<feature type="binding site" evidence="2">
    <location>
        <position position="418"/>
    </location>
    <ligand>
        <name>Ca(2+)</name>
        <dbReference type="ChEBI" id="CHEBI:29108"/>
        <label>2</label>
    </ligand>
</feature>
<feature type="binding site" evidence="2">
    <location>
        <position position="469"/>
    </location>
    <ligand>
        <name>Ca(2+)</name>
        <dbReference type="ChEBI" id="CHEBI:29108"/>
        <label>3</label>
    </ligand>
</feature>
<feature type="binding site" evidence="2">
    <location>
        <position position="472"/>
    </location>
    <ligand>
        <name>Ca(2+)</name>
        <dbReference type="ChEBI" id="CHEBI:29108"/>
        <label>3</label>
    </ligand>
</feature>
<feature type="binding site" evidence="2">
    <location>
        <position position="484"/>
    </location>
    <ligand>
        <name>Ca(2+)</name>
        <dbReference type="ChEBI" id="CHEBI:29108"/>
        <label>3</label>
    </ligand>
</feature>
<feature type="glycosylation site" description="N-linked (GlcNAc...) asparagine" evidence="3">
    <location>
        <position position="259"/>
    </location>
</feature>
<feature type="glycosylation site" description="N-linked (GlcNAc...) asparagine" evidence="3">
    <location>
        <position position="313"/>
    </location>
</feature>
<feature type="glycosylation site" description="N-linked (GlcNAc...) asparagine" evidence="3">
    <location>
        <position position="373"/>
    </location>
</feature>
<feature type="glycosylation site" description="N-linked (GlcNAc...) asparagine" evidence="3">
    <location>
        <position position="519"/>
    </location>
</feature>
<feature type="glycosylation site" description="N-linked (GlcNAc...) asparagine" evidence="3">
    <location>
        <position position="584"/>
    </location>
</feature>
<feature type="disulfide bond" evidence="2">
    <location>
        <begin position="310"/>
        <end position="390"/>
    </location>
</feature>
<feature type="disulfide bond" evidence="2">
    <location>
        <begin position="350"/>
        <end position="374"/>
    </location>
</feature>
<feature type="disulfide bond" evidence="2">
    <location>
        <begin position="352"/>
        <end position="357"/>
    </location>
</feature>
<feature type="disulfide bond" evidence="2">
    <location>
        <begin position="406"/>
        <end position="435"/>
    </location>
</feature>
<feature type="disulfide bond" evidence="2">
    <location>
        <begin position="417"/>
        <end position="430"/>
    </location>
</feature>
<feature type="disulfide bond" evidence="2">
    <location>
        <begin position="419"/>
        <end position="425"/>
    </location>
</feature>
<feature type="disulfide bond" evidence="2">
    <location>
        <begin position="429"/>
        <end position="452"/>
    </location>
</feature>
<feature type="disulfide bond" evidence="2">
    <location>
        <begin position="443"/>
        <end position="449"/>
    </location>
</feature>
<feature type="disulfide bond" evidence="2">
    <location>
        <begin position="448"/>
        <end position="474"/>
    </location>
</feature>
<feature type="disulfide bond" evidence="2">
    <location>
        <begin position="461"/>
        <end position="481"/>
    </location>
</feature>
<feature type="disulfide bond" evidence="2">
    <location>
        <begin position="468"/>
        <end position="500"/>
    </location>
</feature>
<feature type="disulfide bond" evidence="2">
    <location>
        <begin position="493"/>
        <end position="505"/>
    </location>
</feature>
<feature type="disulfide bond" evidence="2">
    <location>
        <begin position="512"/>
        <end position="562"/>
    </location>
</feature>
<feature type="disulfide bond" evidence="2">
    <location>
        <begin position="527"/>
        <end position="569"/>
    </location>
</feature>
<feature type="disulfide bond" evidence="2">
    <location>
        <begin position="540"/>
        <end position="550"/>
    </location>
</feature>
<feature type="disulfide bond" evidence="2">
    <location>
        <begin position="557"/>
        <end position="594"/>
    </location>
</feature>
<feature type="disulfide bond" evidence="2">
    <location>
        <begin position="588"/>
        <end position="599"/>
    </location>
</feature>
<proteinExistence type="evidence at protein level"/>
<accession>Q98UF9</accession>
<evidence type="ECO:0000250" key="1"/>
<evidence type="ECO:0000250" key="2">
    <source>
        <dbReference type="UniProtKB" id="O93523"/>
    </source>
</evidence>
<evidence type="ECO:0000255" key="3"/>
<evidence type="ECO:0000255" key="4">
    <source>
        <dbReference type="PROSITE-ProRule" id="PRU00068"/>
    </source>
</evidence>
<evidence type="ECO:0000255" key="5">
    <source>
        <dbReference type="PROSITE-ProRule" id="PRU00276"/>
    </source>
</evidence>
<evidence type="ECO:0000255" key="6">
    <source>
        <dbReference type="PROSITE-ProRule" id="PRU10095"/>
    </source>
</evidence>
<evidence type="ECO:0000269" key="7">
    <source>
    </source>
</evidence>
<evidence type="ECO:0000269" key="8">
    <source>
    </source>
</evidence>
<evidence type="ECO:0000269" key="9">
    <source>
    </source>
</evidence>
<evidence type="ECO:0000269" key="10">
    <source>
    </source>
</evidence>
<evidence type="ECO:0000303" key="11">
    <source>
    </source>
</evidence>
<evidence type="ECO:0000305" key="12"/>
<evidence type="ECO:0000305" key="13">
    <source>
    </source>
</evidence>
<protein>
    <recommendedName>
        <fullName evidence="11">Zinc metalloproteinase-disintegrin-like HF3</fullName>
        <ecNumber>3.4.24.-</ecNumber>
    </recommendedName>
    <alternativeName>
        <fullName>Snake venom metalloproteinase</fullName>
        <shortName>SVMP</shortName>
    </alternativeName>
</protein>
<sequence length="606" mass="67695">MIQVLLVTICLAAFPYQGSSIILESGNVNDYEVVYARKVTALPKGAVQPKYEDTMQYELKVNGEPVVLHLEKNKQLFSKDYSETHYSPDGREITTYPPVEDHCYYHGRIENDADSTASISACNGLKGHFKLQGETYFIEPLKLPNSEAHAVFKYENVEKEDEVPKMCGVTQTNWESDEPIKKASQLVVTAEQQRYNHYKYIELVILADYRMVTKNNGDLGKIRTKIYEIVNILNEIFRYLYIRIALVGIEIWSNADLSNVTLSADDTLASFGTWRGTVLLKRKSHDNAQLLTAIDFDGQTIGIANIASMCNQNKSVGVVMDYSPINLVVAVIMAHEMGHNLGINHDTGSCSCGGYSCIMAPEISDQPSKLFSNCSKQAYQRYINYYKPQCILNEPLRTDIVSPPVCGNELLEMGEECDCGSPRNCRDPCCDAATCKLHSWVECESGECCDQCRFKGAGTECRAARSECDIAESCTGQSADCPTDDFKRNGQPCLHNYGYCYNGNCPIMYHQCYALFGSNATVAEDGCFEFNENGDKYFYCRKQSGVNIPCAQEDVKCGRLFCHTKKHPCDYKYSEDPDYGMVDNGTKCADGKVCSNGHCVDVATAY</sequence>
<dbReference type="EC" id="3.4.24.-"/>
<dbReference type="EMBL" id="AF149788">
    <property type="protein sequence ID" value="AAG48931.5"/>
    <property type="molecule type" value="mRNA"/>
</dbReference>
<dbReference type="SMR" id="Q98UF9"/>
<dbReference type="MEROPS" id="M12.320"/>
<dbReference type="BRENDA" id="3.4.24.49">
    <property type="organism ID" value="911"/>
</dbReference>
<dbReference type="GO" id="GO:0005576">
    <property type="term" value="C:extracellular region"/>
    <property type="evidence" value="ECO:0007669"/>
    <property type="project" value="UniProtKB-SubCell"/>
</dbReference>
<dbReference type="GO" id="GO:0005886">
    <property type="term" value="C:plasma membrane"/>
    <property type="evidence" value="ECO:0007669"/>
    <property type="project" value="TreeGrafter"/>
</dbReference>
<dbReference type="GO" id="GO:0046872">
    <property type="term" value="F:metal ion binding"/>
    <property type="evidence" value="ECO:0007669"/>
    <property type="project" value="UniProtKB-KW"/>
</dbReference>
<dbReference type="GO" id="GO:0004222">
    <property type="term" value="F:metalloendopeptidase activity"/>
    <property type="evidence" value="ECO:0007669"/>
    <property type="project" value="InterPro"/>
</dbReference>
<dbReference type="GO" id="GO:0090729">
    <property type="term" value="F:toxin activity"/>
    <property type="evidence" value="ECO:0007669"/>
    <property type="project" value="UniProtKB-KW"/>
</dbReference>
<dbReference type="GO" id="GO:0006508">
    <property type="term" value="P:proteolysis"/>
    <property type="evidence" value="ECO:0007669"/>
    <property type="project" value="UniProtKB-KW"/>
</dbReference>
<dbReference type="CDD" id="cd04269">
    <property type="entry name" value="ZnMc_adamalysin_II_like"/>
    <property type="match status" value="1"/>
</dbReference>
<dbReference type="FunFam" id="3.40.390.10:FF:000002">
    <property type="entry name" value="Disintegrin and metalloproteinase domain-containing protein 22"/>
    <property type="match status" value="1"/>
</dbReference>
<dbReference type="FunFam" id="4.10.70.10:FF:000001">
    <property type="entry name" value="Disintegrin and metalloproteinase domain-containing protein 22"/>
    <property type="match status" value="1"/>
</dbReference>
<dbReference type="Gene3D" id="3.40.390.10">
    <property type="entry name" value="Collagenase (Catalytic Domain)"/>
    <property type="match status" value="1"/>
</dbReference>
<dbReference type="Gene3D" id="4.10.70.10">
    <property type="entry name" value="Disintegrin domain"/>
    <property type="match status" value="1"/>
</dbReference>
<dbReference type="InterPro" id="IPR006586">
    <property type="entry name" value="ADAM_Cys-rich"/>
</dbReference>
<dbReference type="InterPro" id="IPR018358">
    <property type="entry name" value="Disintegrin_CS"/>
</dbReference>
<dbReference type="InterPro" id="IPR001762">
    <property type="entry name" value="Disintegrin_dom"/>
</dbReference>
<dbReference type="InterPro" id="IPR036436">
    <property type="entry name" value="Disintegrin_dom_sf"/>
</dbReference>
<dbReference type="InterPro" id="IPR024079">
    <property type="entry name" value="MetalloPept_cat_dom_sf"/>
</dbReference>
<dbReference type="InterPro" id="IPR001590">
    <property type="entry name" value="Peptidase_M12B"/>
</dbReference>
<dbReference type="InterPro" id="IPR002870">
    <property type="entry name" value="Peptidase_M12B_N"/>
</dbReference>
<dbReference type="InterPro" id="IPR034027">
    <property type="entry name" value="Reprolysin_adamalysin"/>
</dbReference>
<dbReference type="PANTHER" id="PTHR11905">
    <property type="entry name" value="ADAM A DISINTEGRIN AND METALLOPROTEASE DOMAIN"/>
    <property type="match status" value="1"/>
</dbReference>
<dbReference type="PANTHER" id="PTHR11905:SF32">
    <property type="entry name" value="DISINTEGRIN AND METALLOPROTEINASE DOMAIN-CONTAINING PROTEIN 28"/>
    <property type="match status" value="1"/>
</dbReference>
<dbReference type="Pfam" id="PF08516">
    <property type="entry name" value="ADAM_CR"/>
    <property type="match status" value="1"/>
</dbReference>
<dbReference type="Pfam" id="PF00200">
    <property type="entry name" value="Disintegrin"/>
    <property type="match status" value="1"/>
</dbReference>
<dbReference type="Pfam" id="PF01562">
    <property type="entry name" value="Pep_M12B_propep"/>
    <property type="match status" value="1"/>
</dbReference>
<dbReference type="Pfam" id="PF01421">
    <property type="entry name" value="Reprolysin"/>
    <property type="match status" value="1"/>
</dbReference>
<dbReference type="PRINTS" id="PR00289">
    <property type="entry name" value="DISINTEGRIN"/>
</dbReference>
<dbReference type="SMART" id="SM00608">
    <property type="entry name" value="ACR"/>
    <property type="match status" value="1"/>
</dbReference>
<dbReference type="SMART" id="SM00050">
    <property type="entry name" value="DISIN"/>
    <property type="match status" value="1"/>
</dbReference>
<dbReference type="SUPFAM" id="SSF57552">
    <property type="entry name" value="Blood coagulation inhibitor (disintegrin)"/>
    <property type="match status" value="1"/>
</dbReference>
<dbReference type="SUPFAM" id="SSF55486">
    <property type="entry name" value="Metalloproteases ('zincins'), catalytic domain"/>
    <property type="match status" value="1"/>
</dbReference>
<dbReference type="PROSITE" id="PS50215">
    <property type="entry name" value="ADAM_MEPRO"/>
    <property type="match status" value="1"/>
</dbReference>
<dbReference type="PROSITE" id="PS00427">
    <property type="entry name" value="DISINTEGRIN_1"/>
    <property type="match status" value="1"/>
</dbReference>
<dbReference type="PROSITE" id="PS50214">
    <property type="entry name" value="DISINTEGRIN_2"/>
    <property type="match status" value="1"/>
</dbReference>
<dbReference type="PROSITE" id="PS00142">
    <property type="entry name" value="ZINC_PROTEASE"/>
    <property type="match status" value="1"/>
</dbReference>
<reference key="1">
    <citation type="journal article" date="2004" name="Biochem. Biophys. Res. Commun.">
        <title>Activation of alpha(M)beta(2)-mediated phagocytosis by HF3, a P-III class metalloproteinase isolated from the venom of Bothrops jararaca.</title>
        <authorList>
            <person name="Silva C.A."/>
            <person name="Zuliani J.P."/>
            <person name="Assakura M.T."/>
            <person name="Mentele R."/>
            <person name="Camargo A.C.M."/>
            <person name="Teixeira C.F.P."/>
            <person name="Serrano S.M.T."/>
        </authorList>
    </citation>
    <scope>NUCLEOTIDE SEQUENCE [MRNA]</scope>
    <scope>PROTEIN SEQUENCE OF 248-253; 257-268; 273-276; 296-303 AND 395-420</scope>
    <scope>FUNCTION</scope>
    <scope>SUBCELLULAR LOCATION</scope>
    <source>
        <tissue>Venom</tissue>
        <tissue>Venom gland</tissue>
    </source>
</reference>
<reference key="2">
    <citation type="journal article" date="1988" name="Toxicon">
        <title>Antigenic relationship of hemorrhagic factors and proteases isolated from the venoms of three species of Bothrops snakes.</title>
        <authorList>
            <person name="Mandelbaum F.R."/>
            <person name="Assakura M.T."/>
        </authorList>
    </citation>
    <scope>FUNCTION</scope>
    <scope>SUBUNIT</scope>
    <source>
        <tissue>Venom</tissue>
    </source>
</reference>
<reference key="3">
    <citation type="journal article" date="2010" name="J. Proteome Res.">
        <title>Analysis of the ontogenetic variation in the venom proteome/peptidome of Bothrops jararaca reveals different strategies to deal with prey.</title>
        <authorList>
            <person name="Zelanis A."/>
            <person name="Tashima A.K."/>
            <person name="Rocha M.M."/>
            <person name="Furtado M.F."/>
            <person name="Camargo A.C."/>
            <person name="Ho P.L."/>
            <person name="Serrano S.M."/>
        </authorList>
    </citation>
    <scope>IDENTIFICATION BY MASS SPECTROMETRY</scope>
    <scope>DEVELOPMENTAL STAGE</scope>
    <source>
        <tissue>Venom</tissue>
    </source>
</reference>
<reference key="4">
    <citation type="journal article" date="2016" name="Amino Acids">
        <title>Proteome-derived peptide library for the elucidation of the cleavage specificity of HF3, a snake venom metalloproteinase.</title>
        <authorList>
            <person name="Bertholim L."/>
            <person name="Zelanis A."/>
            <person name="Oliveira A.K."/>
            <person name="Serrano S.M."/>
        </authorList>
    </citation>
    <scope>FUNCTION</scope>
</reference>
<name>VM3H3_BOTJA</name>